<proteinExistence type="inferred from homology"/>
<reference key="1">
    <citation type="journal article" date="2009" name="PLoS Genet.">
        <title>Organised genome dynamics in the Escherichia coli species results in highly diverse adaptive paths.</title>
        <authorList>
            <person name="Touchon M."/>
            <person name="Hoede C."/>
            <person name="Tenaillon O."/>
            <person name="Barbe V."/>
            <person name="Baeriswyl S."/>
            <person name="Bidet P."/>
            <person name="Bingen E."/>
            <person name="Bonacorsi S."/>
            <person name="Bouchier C."/>
            <person name="Bouvet O."/>
            <person name="Calteau A."/>
            <person name="Chiapello H."/>
            <person name="Clermont O."/>
            <person name="Cruveiller S."/>
            <person name="Danchin A."/>
            <person name="Diard M."/>
            <person name="Dossat C."/>
            <person name="Karoui M.E."/>
            <person name="Frapy E."/>
            <person name="Garry L."/>
            <person name="Ghigo J.M."/>
            <person name="Gilles A.M."/>
            <person name="Johnson J."/>
            <person name="Le Bouguenec C."/>
            <person name="Lescat M."/>
            <person name="Mangenot S."/>
            <person name="Martinez-Jehanne V."/>
            <person name="Matic I."/>
            <person name="Nassif X."/>
            <person name="Oztas S."/>
            <person name="Petit M.A."/>
            <person name="Pichon C."/>
            <person name="Rouy Z."/>
            <person name="Ruf C.S."/>
            <person name="Schneider D."/>
            <person name="Tourret J."/>
            <person name="Vacherie B."/>
            <person name="Vallenet D."/>
            <person name="Medigue C."/>
            <person name="Rocha E.P.C."/>
            <person name="Denamur E."/>
        </authorList>
    </citation>
    <scope>NUCLEOTIDE SEQUENCE [LARGE SCALE GENOMIC DNA]</scope>
    <source>
        <strain>IAI39 / ExPEC</strain>
    </source>
</reference>
<dbReference type="EC" id="2.7.8.-" evidence="1"/>
<dbReference type="EMBL" id="CU928164">
    <property type="protein sequence ID" value="CAR17716.1"/>
    <property type="molecule type" value="Genomic_DNA"/>
</dbReference>
<dbReference type="RefSeq" id="WP_000214516.1">
    <property type="nucleotide sequence ID" value="NC_011750.1"/>
</dbReference>
<dbReference type="RefSeq" id="YP_002407584.1">
    <property type="nucleotide sequence ID" value="NC_011750.1"/>
</dbReference>
<dbReference type="SMR" id="B7NVL8"/>
<dbReference type="STRING" id="585057.ECIAI39_1584"/>
<dbReference type="GeneID" id="93775314"/>
<dbReference type="KEGG" id="ect:ECIAI39_1584"/>
<dbReference type="PATRIC" id="fig|585057.6.peg.1656"/>
<dbReference type="HOGENOM" id="CLU_038053_1_0_6"/>
<dbReference type="Proteomes" id="UP000000749">
    <property type="component" value="Chromosome"/>
</dbReference>
<dbReference type="GO" id="GO:0005886">
    <property type="term" value="C:plasma membrane"/>
    <property type="evidence" value="ECO:0007669"/>
    <property type="project" value="UniProtKB-SubCell"/>
</dbReference>
<dbReference type="GO" id="GO:0008808">
    <property type="term" value="F:cardiolipin synthase activity"/>
    <property type="evidence" value="ECO:0007669"/>
    <property type="project" value="InterPro"/>
</dbReference>
<dbReference type="GO" id="GO:0032049">
    <property type="term" value="P:cardiolipin biosynthetic process"/>
    <property type="evidence" value="ECO:0007669"/>
    <property type="project" value="InterPro"/>
</dbReference>
<dbReference type="CDD" id="cd09152">
    <property type="entry name" value="PLDc_EcCLS_like_1"/>
    <property type="match status" value="1"/>
</dbReference>
<dbReference type="CDD" id="cd09158">
    <property type="entry name" value="PLDc_EcCLS_like_2"/>
    <property type="match status" value="1"/>
</dbReference>
<dbReference type="FunFam" id="3.30.870.10:FF:000002">
    <property type="entry name" value="Cardiolipin synthase A"/>
    <property type="match status" value="1"/>
</dbReference>
<dbReference type="FunFam" id="3.30.870.10:FF:000003">
    <property type="entry name" value="Cardiolipin synthase A"/>
    <property type="match status" value="1"/>
</dbReference>
<dbReference type="Gene3D" id="3.30.870.10">
    <property type="entry name" value="Endonuclease Chain A"/>
    <property type="match status" value="2"/>
</dbReference>
<dbReference type="HAMAP" id="MF_00190">
    <property type="entry name" value="Cardiolipin_synth_ClsA"/>
    <property type="match status" value="1"/>
</dbReference>
<dbReference type="InterPro" id="IPR022924">
    <property type="entry name" value="Cardiolipin_synthase"/>
</dbReference>
<dbReference type="InterPro" id="IPR030840">
    <property type="entry name" value="CL_synthase_A"/>
</dbReference>
<dbReference type="InterPro" id="IPR027379">
    <property type="entry name" value="CLS_N"/>
</dbReference>
<dbReference type="InterPro" id="IPR025202">
    <property type="entry name" value="PLD-like_dom"/>
</dbReference>
<dbReference type="InterPro" id="IPR001736">
    <property type="entry name" value="PLipase_D/transphosphatidylase"/>
</dbReference>
<dbReference type="NCBIfam" id="TIGR04265">
    <property type="entry name" value="bac_cardiolipin"/>
    <property type="match status" value="1"/>
</dbReference>
<dbReference type="PANTHER" id="PTHR21248">
    <property type="entry name" value="CARDIOLIPIN SYNTHASE"/>
    <property type="match status" value="1"/>
</dbReference>
<dbReference type="PANTHER" id="PTHR21248:SF22">
    <property type="entry name" value="PHOSPHOLIPASE D"/>
    <property type="match status" value="1"/>
</dbReference>
<dbReference type="Pfam" id="PF13091">
    <property type="entry name" value="PLDc_2"/>
    <property type="match status" value="2"/>
</dbReference>
<dbReference type="Pfam" id="PF13396">
    <property type="entry name" value="PLDc_N"/>
    <property type="match status" value="1"/>
</dbReference>
<dbReference type="SMART" id="SM00155">
    <property type="entry name" value="PLDc"/>
    <property type="match status" value="2"/>
</dbReference>
<dbReference type="SUPFAM" id="SSF56024">
    <property type="entry name" value="Phospholipase D/nuclease"/>
    <property type="match status" value="2"/>
</dbReference>
<dbReference type="PROSITE" id="PS50035">
    <property type="entry name" value="PLD"/>
    <property type="match status" value="2"/>
</dbReference>
<keyword id="KW-0997">Cell inner membrane</keyword>
<keyword id="KW-1003">Cell membrane</keyword>
<keyword id="KW-0444">Lipid biosynthesis</keyword>
<keyword id="KW-0443">Lipid metabolism</keyword>
<keyword id="KW-0472">Membrane</keyword>
<keyword id="KW-0594">Phospholipid biosynthesis</keyword>
<keyword id="KW-1208">Phospholipid metabolism</keyword>
<keyword id="KW-0677">Repeat</keyword>
<keyword id="KW-0808">Transferase</keyword>
<keyword id="KW-0812">Transmembrane</keyword>
<keyword id="KW-1133">Transmembrane helix</keyword>
<gene>
    <name evidence="1" type="primary">clsA</name>
    <name type="synonym">cls</name>
    <name type="ordered locus">ECIAI39_1584</name>
</gene>
<feature type="chain" id="PRO_1000118587" description="Cardiolipin synthase A">
    <location>
        <begin position="1"/>
        <end position="486"/>
    </location>
</feature>
<feature type="transmembrane region" description="Helical" evidence="1">
    <location>
        <begin position="3"/>
        <end position="23"/>
    </location>
</feature>
<feature type="transmembrane region" description="Helical" evidence="1">
    <location>
        <begin position="38"/>
        <end position="58"/>
    </location>
</feature>
<feature type="domain" description="PLD phosphodiesterase 1" evidence="1">
    <location>
        <begin position="219"/>
        <end position="246"/>
    </location>
</feature>
<feature type="domain" description="PLD phosphodiesterase 2" evidence="1">
    <location>
        <begin position="399"/>
        <end position="426"/>
    </location>
</feature>
<feature type="active site" evidence="1">
    <location>
        <position position="224"/>
    </location>
</feature>
<feature type="active site" evidence="1">
    <location>
        <position position="226"/>
    </location>
</feature>
<feature type="active site" evidence="1">
    <location>
        <position position="231"/>
    </location>
</feature>
<feature type="active site" evidence="1">
    <location>
        <position position="404"/>
    </location>
</feature>
<feature type="active site" evidence="1">
    <location>
        <position position="406"/>
    </location>
</feature>
<feature type="active site" evidence="1">
    <location>
        <position position="411"/>
    </location>
</feature>
<evidence type="ECO:0000255" key="1">
    <source>
        <dbReference type="HAMAP-Rule" id="MF_00190"/>
    </source>
</evidence>
<name>CLSA_ECO7I</name>
<protein>
    <recommendedName>
        <fullName evidence="1">Cardiolipin synthase A</fullName>
        <shortName evidence="1">CL synthase</shortName>
        <ecNumber evidence="1">2.7.8.-</ecNumber>
    </recommendedName>
</protein>
<accession>B7NVL8</accession>
<organism>
    <name type="scientific">Escherichia coli O7:K1 (strain IAI39 / ExPEC)</name>
    <dbReference type="NCBI Taxonomy" id="585057"/>
    <lineage>
        <taxon>Bacteria</taxon>
        <taxon>Pseudomonadati</taxon>
        <taxon>Pseudomonadota</taxon>
        <taxon>Gammaproteobacteria</taxon>
        <taxon>Enterobacterales</taxon>
        <taxon>Enterobacteriaceae</taxon>
        <taxon>Escherichia</taxon>
    </lineage>
</organism>
<comment type="function">
    <text evidence="1">Catalyzes the reversible phosphatidyl group transfer from one phosphatidylglycerol molecule to another to form cardiolipin (CL) (diphosphatidylglycerol) and glycerol.</text>
</comment>
<comment type="catalytic activity">
    <reaction evidence="1">
        <text>2 a 1,2-diacyl-sn-glycero-3-phospho-(1'-sn-glycerol) = a cardiolipin + glycerol</text>
        <dbReference type="Rhea" id="RHEA:31451"/>
        <dbReference type="ChEBI" id="CHEBI:17754"/>
        <dbReference type="ChEBI" id="CHEBI:62237"/>
        <dbReference type="ChEBI" id="CHEBI:64716"/>
    </reaction>
</comment>
<comment type="subcellular location">
    <subcellularLocation>
        <location evidence="1">Cell inner membrane</location>
        <topology evidence="1">Multi-pass membrane protein</topology>
    </subcellularLocation>
</comment>
<comment type="similarity">
    <text evidence="1">Belongs to the phospholipase D family. Cardiolipin synthase subfamily. ClsA sub-subfamily.</text>
</comment>
<sequence>MTTVYTLVSWLAILGYWLLIAGVTLRILMKRRAVPSAMAWLLIIYILPLVGIIAYLAVGELHLGKRRAERARAMWPSTAKWLNDLKACKHIFAEENSSVAAPLFKLCERRQGIAGVKGNQLQLMTESDDVMQALIRDIQLARHNIEMVFYIWQPGGMADQVAESLMAAARRGIHCRLMLDSAGSVAFFRSPWPELMRNAGIEVVEALKVNLMRVFLRRMDLRQHRKMIMIDNYIAYTGSMNMVDPRYFKQDAGVGQWIDLMARMEGPIATAMGIIYSCDWEIETGKRILPPPPDVNIMPFEQASGHTIHTIASGPGFPEDLIHQALLTAAYSAREYLIMTTPYFVPSDDLLHAICTAAQRGVDVSIILPRKNDSMLVGWASRAFFTELLAAGVKIYQFEGGLLHTKSVLVDGELSLVGTVNLDMRSLWLNFEITLAIDDKGFGADLAAVQDDYISRSRLLDARLWLKRPLWQRVAERLFYFFSPLL</sequence>